<protein>
    <recommendedName>
        <fullName>Contactin-5</fullName>
    </recommendedName>
    <alternativeName>
        <fullName>Neural recognition molecule NB-2</fullName>
    </alternativeName>
</protein>
<reference key="1">
    <citation type="journal article" date="1996" name="Neurosci. Lett.">
        <title>Novel neural adhesion molecules in the contactin/F3 subgroup of the immunoglobulin superfamily: isolation and characterization of cDNAs from rat brain.</title>
        <authorList>
            <person name="Ogawa J."/>
            <person name="Kaneko H."/>
            <person name="Masuda T."/>
            <person name="Nagata S."/>
            <person name="Hosoya H."/>
            <person name="Watanabe K."/>
        </authorList>
    </citation>
    <scope>NUCLEOTIDE SEQUENCE [MRNA]</scope>
    <scope>TISSUE SPECIFICITY</scope>
    <source>
        <strain>Wistar</strain>
        <tissue>Brain</tissue>
    </source>
</reference>
<reference key="2">
    <citation type="journal article" date="1997" name="Neurosci. Lett.">
        <authorList>
            <person name="Ogawa J."/>
            <person name="Kaneko H."/>
            <person name="Masuda T."/>
            <person name="Nagata S."/>
            <person name="Hosoya H."/>
            <person name="Watanabe K."/>
        </authorList>
    </citation>
    <scope>ERRATUM OF PUBMED:8945756</scope>
</reference>
<reference key="3">
    <citation type="journal article" date="2001" name="J. Neurosci. Res.">
        <title>Neural recognition molecule NB-2 of the contactin/F3 subgroup in rat: specificity in neurite outgrowth-promoting activity and restricted expression in the brain regions.</title>
        <authorList>
            <person name="Ogawa J."/>
            <person name="Lee S."/>
            <person name="Itoh K."/>
            <person name="Nagata S."/>
            <person name="Machida T."/>
            <person name="Takeda Y."/>
            <person name="Watanabe K."/>
        </authorList>
    </citation>
    <scope>FUNCTION</scope>
    <scope>GPI-ANCHOR</scope>
    <scope>TISSUE SPECIFICITY</scope>
    <scope>DEVELOPMENTAL STAGE</scope>
</reference>
<organism>
    <name type="scientific">Rattus norvegicus</name>
    <name type="common">Rat</name>
    <dbReference type="NCBI Taxonomy" id="10116"/>
    <lineage>
        <taxon>Eukaryota</taxon>
        <taxon>Metazoa</taxon>
        <taxon>Chordata</taxon>
        <taxon>Craniata</taxon>
        <taxon>Vertebrata</taxon>
        <taxon>Euteleostomi</taxon>
        <taxon>Mammalia</taxon>
        <taxon>Eutheria</taxon>
        <taxon>Euarchontoglires</taxon>
        <taxon>Glires</taxon>
        <taxon>Rodentia</taxon>
        <taxon>Myomorpha</taxon>
        <taxon>Muroidea</taxon>
        <taxon>Muridae</taxon>
        <taxon>Murinae</taxon>
        <taxon>Rattus</taxon>
    </lineage>
</organism>
<comment type="function">
    <text evidence="6">Contactins mediate cell surface interactions during nervous system development. Has some neurite outgrowth-promoting activity in the cerebral cortical neurons but not in hippocampal neurons. Probably involved in neuronal activity in the auditory system.</text>
</comment>
<comment type="subunit">
    <text evidence="1">Interacts with PTPRG.</text>
</comment>
<comment type="subcellular location">
    <subcellularLocation>
        <location>Cell membrane</location>
        <topology>Lipid-anchor</topology>
        <topology>GPI-anchor</topology>
    </subcellularLocation>
</comment>
<comment type="tissue specificity">
    <text evidence="6 7">Specifically expressed in the nervous system. Expressed in cerebrum and cerebellum but at low level in spinal cord. In brain, it is expressed in highly restricted regions at postnatal day 7, such as the auditory pathway, including the cochlear nucleus, superior olive, inferior colliculus, medial geniculate nucleus and auditory cortex. Expressed in the accessory olfactory bulb, glomerular and mitral cell layers in the olfactory bulb, anterior thalamic nuclei, layers II-IV of the cerebral cortex, dentate gyrus of the hippocampus and external granule cells and Purkinje cells of the cerebellum. Also expressed in the piriform cortex, inferior olive and facial nucleus. Weakly or not expressed in other parts of the brain.</text>
</comment>
<comment type="developmental stage">
    <text evidence="6">Expressed after birth, reaching a maximum at postnatal day 14 in the cerebrum and postnatal day 3 in the cerebellum. Then, it decreases abruptly thereafter (at protein level).</text>
</comment>
<comment type="similarity">
    <text evidence="8">Belongs to the immunoglobulin superfamily. Contactin family.</text>
</comment>
<sequence length="1099" mass="120603">MASSWRLILFLSFTSCLSEYSEALSGLSTSYAALLRIKKSSTSSAFGSKSRPRYSSPSLGTLSVSPPSWRGAAQQYHSPVNLYHSPDAFRQDESVDYGPVFVQEPDDIIFPTDSDEKKVALNCEVRGNPSPTYRWLRNGTEIDLESDYRYSMIDGTFIINNPSESRDSGLYQCLATNTFGSILSREATLQFAYLGNFSGRTRSAVSVREGQGVVLMCSPPPHSPEIIYSWVFNEFPSFVAEDSRRFISQETGNLYISKVQTSDVGSYICLVKNAVTNARVLSPPTPLTLRNDGVMGEYEPKIEVHFPTTVTAAKGTTVKMECFALGNPVPTITWMKVNGYIPSKSRLRKSQAVLEIPNLQLDDAGIYECTAENSRGKNSFRGQLQIYTYPHWVQKLNDTQLDSGSPLQWECKATGKPRPTYRWLKNGAPLLPQSRVDTANGVLAIHSVNQSDAGMYQCLAENKYGAIYASAELKILASPPSFELNQVKKSIIVTKDREVLIECKPQGSPKPAISWRKGDKAVRGNKRIAILPDGSLRILNASKADEGKYICQGVNIFGSAEIIASVSVKEPTRIELTPKRTELTVGESIVLNCKAMHDSSLDVTFYWTLKGQPIDFEKEGGHFESIRAQASSADLMIRNILLMHAGRYGCRVQTTADSVSDEAELLVRGPPGPPGVVIVEEITESTATLSWSPATDNHSPISSYNLQARSPFSLGWQTVKTVPEVITGDMESAMAVDLNPWVEYEFRVVATNPIGTGDPSIPSRMIRTNEAVPKTAPSNVSGGSGRRHELVIAWEPVSEEFQNGEGFGYIVAFRPNGTRGWKEKMVTSSDASKFIYRDESVPPLTPFEVKVGVYNNKGDGPFSQIVVICSAEGEPTAAPTDVTATSVSVSEIFVVWKHVKESLGRPQGFEIGYWKDTEPEDSAETVRTRGNESFVMLTGLEGDTLYHLTVRAYNGAGYGPPSREVSATTKRHPPSEPPGNLRWEQQGSQVSLGWEPVRPLANESEVMGYKVFYRQEGHSKGQVIETQKPQAVVPLPEAGVYIIEVRAYSEGGDGTASSQIRVPSYAGGKITSAQSTLHSLSKWSSVTLLLALMLPSSSW</sequence>
<dbReference type="EMBL" id="D87212">
    <property type="protein sequence ID" value="BAA13311.1"/>
    <property type="molecule type" value="mRNA"/>
</dbReference>
<dbReference type="RefSeq" id="NP_446198.1">
    <property type="nucleotide sequence ID" value="NM_053746.1"/>
</dbReference>
<dbReference type="RefSeq" id="XP_017450897.1">
    <property type="nucleotide sequence ID" value="XM_017595408.3"/>
</dbReference>
<dbReference type="RefSeq" id="XP_017450898.1">
    <property type="nucleotide sequence ID" value="XM_017595409.2"/>
</dbReference>
<dbReference type="RefSeq" id="XP_017450899.1">
    <property type="nucleotide sequence ID" value="XM_017595410.1"/>
</dbReference>
<dbReference type="SMR" id="P97527"/>
<dbReference type="FunCoup" id="P97527">
    <property type="interactions" value="1179"/>
</dbReference>
<dbReference type="STRING" id="10116.ENSRNOP00000009418"/>
<dbReference type="GlyCosmos" id="P97527">
    <property type="glycosylation" value="9 sites, No reported glycans"/>
</dbReference>
<dbReference type="GlyGen" id="P97527">
    <property type="glycosylation" value="9 sites"/>
</dbReference>
<dbReference type="PhosphoSitePlus" id="P97527"/>
<dbReference type="PaxDb" id="10116-ENSRNOP00000009418"/>
<dbReference type="Ensembl" id="ENSRNOT00000009418.8">
    <property type="protein sequence ID" value="ENSRNOP00000009418.8"/>
    <property type="gene ID" value="ENSRNOG00000007038.8"/>
</dbReference>
<dbReference type="GeneID" id="114589"/>
<dbReference type="KEGG" id="rno:114589"/>
<dbReference type="UCSC" id="RGD:621302">
    <property type="organism name" value="rat"/>
</dbReference>
<dbReference type="AGR" id="RGD:621302"/>
<dbReference type="CTD" id="53942"/>
<dbReference type="RGD" id="621302">
    <property type="gene designation" value="Cntn5"/>
</dbReference>
<dbReference type="eggNOG" id="KOG3513">
    <property type="taxonomic scope" value="Eukaryota"/>
</dbReference>
<dbReference type="GeneTree" id="ENSGT00940000158183"/>
<dbReference type="InParanoid" id="P97527"/>
<dbReference type="OMA" id="CLTWTVL"/>
<dbReference type="OrthoDB" id="42848at9989"/>
<dbReference type="PhylomeDB" id="P97527"/>
<dbReference type="Reactome" id="R-RNO-163125">
    <property type="pathway name" value="Post-translational modification: synthesis of GPI-anchored proteins"/>
</dbReference>
<dbReference type="PRO" id="PR:P97527"/>
<dbReference type="Proteomes" id="UP000002494">
    <property type="component" value="Chromosome 8"/>
</dbReference>
<dbReference type="GO" id="GO:0030424">
    <property type="term" value="C:axon"/>
    <property type="evidence" value="ECO:0000318"/>
    <property type="project" value="GO_Central"/>
</dbReference>
<dbReference type="GO" id="GO:0098982">
    <property type="term" value="C:GABA-ergic synapse"/>
    <property type="evidence" value="ECO:0000266"/>
    <property type="project" value="RGD"/>
</dbReference>
<dbReference type="GO" id="GO:0005886">
    <property type="term" value="C:plasma membrane"/>
    <property type="evidence" value="ECO:0000318"/>
    <property type="project" value="GO_Central"/>
</dbReference>
<dbReference type="GO" id="GO:0042734">
    <property type="term" value="C:presynaptic membrane"/>
    <property type="evidence" value="ECO:0000266"/>
    <property type="project" value="RGD"/>
</dbReference>
<dbReference type="GO" id="GO:0098552">
    <property type="term" value="C:side of membrane"/>
    <property type="evidence" value="ECO:0007669"/>
    <property type="project" value="UniProtKB-KW"/>
</dbReference>
<dbReference type="GO" id="GO:0098632">
    <property type="term" value="F:cell-cell adhesion mediator activity"/>
    <property type="evidence" value="ECO:0000318"/>
    <property type="project" value="GO_Central"/>
</dbReference>
<dbReference type="GO" id="GO:0007411">
    <property type="term" value="P:axon guidance"/>
    <property type="evidence" value="ECO:0000318"/>
    <property type="project" value="GO_Central"/>
</dbReference>
<dbReference type="GO" id="GO:0007155">
    <property type="term" value="P:cell adhesion"/>
    <property type="evidence" value="ECO:0000303"/>
    <property type="project" value="RGD"/>
</dbReference>
<dbReference type="GO" id="GO:0098609">
    <property type="term" value="P:cell-cell adhesion"/>
    <property type="evidence" value="ECO:0000318"/>
    <property type="project" value="GO_Central"/>
</dbReference>
<dbReference type="GO" id="GO:0099054">
    <property type="term" value="P:presynapse assembly"/>
    <property type="evidence" value="ECO:0000266"/>
    <property type="project" value="RGD"/>
</dbReference>
<dbReference type="GO" id="GO:0007605">
    <property type="term" value="P:sensory perception of sound"/>
    <property type="evidence" value="ECO:0000266"/>
    <property type="project" value="RGD"/>
</dbReference>
<dbReference type="CDD" id="cd00063">
    <property type="entry name" value="FN3"/>
    <property type="match status" value="4"/>
</dbReference>
<dbReference type="CDD" id="cd04969">
    <property type="entry name" value="Ig5_Contactin"/>
    <property type="match status" value="1"/>
</dbReference>
<dbReference type="FunFam" id="2.60.40.10:FF:000035">
    <property type="entry name" value="Contactin 1"/>
    <property type="match status" value="1"/>
</dbReference>
<dbReference type="FunFam" id="2.60.40.10:FF:000044">
    <property type="entry name" value="Contactin 1"/>
    <property type="match status" value="1"/>
</dbReference>
<dbReference type="FunFam" id="2.60.40.10:FF:000047">
    <property type="entry name" value="Contactin 1"/>
    <property type="match status" value="1"/>
</dbReference>
<dbReference type="FunFam" id="2.60.40.10:FF:000052">
    <property type="entry name" value="Contactin 1"/>
    <property type="match status" value="1"/>
</dbReference>
<dbReference type="FunFam" id="2.60.40.10:FF:000054">
    <property type="entry name" value="Contactin 1"/>
    <property type="match status" value="1"/>
</dbReference>
<dbReference type="FunFam" id="2.60.40.10:FF:000064">
    <property type="entry name" value="Contactin 1"/>
    <property type="match status" value="1"/>
</dbReference>
<dbReference type="FunFam" id="2.60.40.10:FF:000004">
    <property type="entry name" value="DCC isoform 1"/>
    <property type="match status" value="2"/>
</dbReference>
<dbReference type="FunFam" id="2.60.40.10:FF:000005">
    <property type="entry name" value="Neuronal cell adhesion molecule"/>
    <property type="match status" value="1"/>
</dbReference>
<dbReference type="FunFam" id="2.60.40.10:FF:000028">
    <property type="entry name" value="Neuronal cell adhesion molecule"/>
    <property type="match status" value="1"/>
</dbReference>
<dbReference type="Gene3D" id="2.60.40.10">
    <property type="entry name" value="Immunoglobulins"/>
    <property type="match status" value="10"/>
</dbReference>
<dbReference type="InterPro" id="IPR003961">
    <property type="entry name" value="FN3_dom"/>
</dbReference>
<dbReference type="InterPro" id="IPR036116">
    <property type="entry name" value="FN3_sf"/>
</dbReference>
<dbReference type="InterPro" id="IPR007110">
    <property type="entry name" value="Ig-like_dom"/>
</dbReference>
<dbReference type="InterPro" id="IPR036179">
    <property type="entry name" value="Ig-like_dom_sf"/>
</dbReference>
<dbReference type="InterPro" id="IPR013783">
    <property type="entry name" value="Ig-like_fold"/>
</dbReference>
<dbReference type="InterPro" id="IPR013098">
    <property type="entry name" value="Ig_I-set"/>
</dbReference>
<dbReference type="InterPro" id="IPR003599">
    <property type="entry name" value="Ig_sub"/>
</dbReference>
<dbReference type="InterPro" id="IPR003598">
    <property type="entry name" value="Ig_sub2"/>
</dbReference>
<dbReference type="PANTHER" id="PTHR44170:SF17">
    <property type="entry name" value="CONTACTIN-5"/>
    <property type="match status" value="1"/>
</dbReference>
<dbReference type="PANTHER" id="PTHR44170">
    <property type="entry name" value="PROTEIN SIDEKICK"/>
    <property type="match status" value="1"/>
</dbReference>
<dbReference type="Pfam" id="PF00041">
    <property type="entry name" value="fn3"/>
    <property type="match status" value="3"/>
</dbReference>
<dbReference type="Pfam" id="PF07679">
    <property type="entry name" value="I-set"/>
    <property type="match status" value="3"/>
</dbReference>
<dbReference type="Pfam" id="PF13927">
    <property type="entry name" value="Ig_3"/>
    <property type="match status" value="3"/>
</dbReference>
<dbReference type="SMART" id="SM00060">
    <property type="entry name" value="FN3"/>
    <property type="match status" value="4"/>
</dbReference>
<dbReference type="SMART" id="SM00409">
    <property type="entry name" value="IG"/>
    <property type="match status" value="6"/>
</dbReference>
<dbReference type="SMART" id="SM00408">
    <property type="entry name" value="IGc2"/>
    <property type="match status" value="6"/>
</dbReference>
<dbReference type="SUPFAM" id="SSF49265">
    <property type="entry name" value="Fibronectin type III"/>
    <property type="match status" value="2"/>
</dbReference>
<dbReference type="SUPFAM" id="SSF48726">
    <property type="entry name" value="Immunoglobulin"/>
    <property type="match status" value="6"/>
</dbReference>
<dbReference type="PROSITE" id="PS50853">
    <property type="entry name" value="FN3"/>
    <property type="match status" value="4"/>
</dbReference>
<dbReference type="PROSITE" id="PS50835">
    <property type="entry name" value="IG_LIKE"/>
    <property type="match status" value="6"/>
</dbReference>
<gene>
    <name type="primary">Cntn5</name>
</gene>
<keyword id="KW-0130">Cell adhesion</keyword>
<keyword id="KW-1003">Cell membrane</keyword>
<keyword id="KW-1015">Disulfide bond</keyword>
<keyword id="KW-0325">Glycoprotein</keyword>
<keyword id="KW-0336">GPI-anchor</keyword>
<keyword id="KW-0393">Immunoglobulin domain</keyword>
<keyword id="KW-0449">Lipoprotein</keyword>
<keyword id="KW-0472">Membrane</keyword>
<keyword id="KW-1185">Reference proteome</keyword>
<keyword id="KW-0677">Repeat</keyword>
<keyword id="KW-0732">Signal</keyword>
<name>CNTN5_RAT</name>
<proteinExistence type="evidence at protein level"/>
<evidence type="ECO:0000250" key="1"/>
<evidence type="ECO:0000255" key="2"/>
<evidence type="ECO:0000255" key="3">
    <source>
        <dbReference type="PROSITE-ProRule" id="PRU00114"/>
    </source>
</evidence>
<evidence type="ECO:0000255" key="4">
    <source>
        <dbReference type="PROSITE-ProRule" id="PRU00316"/>
    </source>
</evidence>
<evidence type="ECO:0000256" key="5">
    <source>
        <dbReference type="SAM" id="MobiDB-lite"/>
    </source>
</evidence>
<evidence type="ECO:0000269" key="6">
    <source>
    </source>
</evidence>
<evidence type="ECO:0000269" key="7">
    <source>
    </source>
</evidence>
<evidence type="ECO:0000305" key="8"/>
<feature type="signal peptide" evidence="2">
    <location>
        <begin position="1"/>
        <end position="18"/>
    </location>
</feature>
<feature type="chain" id="PRO_0000014721" description="Contactin-5">
    <location>
        <begin position="19"/>
        <end position="1072"/>
    </location>
</feature>
<feature type="propeptide" id="PRO_0000014722" description="Removed in mature form" evidence="2">
    <location>
        <begin position="1073"/>
        <end position="1099"/>
    </location>
</feature>
<feature type="domain" description="Ig-like C2-type 1">
    <location>
        <begin position="99"/>
        <end position="190"/>
    </location>
</feature>
<feature type="domain" description="Ig-like C2-type 2">
    <location>
        <begin position="196"/>
        <end position="282"/>
    </location>
</feature>
<feature type="domain" description="Ig-like C2-type 3">
    <location>
        <begin position="300"/>
        <end position="385"/>
    </location>
</feature>
<feature type="domain" description="Ig-like C2-type 4">
    <location>
        <begin position="390"/>
        <end position="474"/>
    </location>
</feature>
<feature type="domain" description="Ig-like C2-type 5">
    <location>
        <begin position="480"/>
        <end position="569"/>
    </location>
</feature>
<feature type="domain" description="Ig-like C2-type 6">
    <location>
        <begin position="571"/>
        <end position="660"/>
    </location>
</feature>
<feature type="domain" description="Fibronectin type-III 1" evidence="4">
    <location>
        <begin position="673"/>
        <end position="771"/>
    </location>
</feature>
<feature type="domain" description="Fibronectin type-III 2" evidence="4">
    <location>
        <begin position="776"/>
        <end position="873"/>
    </location>
</feature>
<feature type="domain" description="Fibronectin type-III 3" evidence="4">
    <location>
        <begin position="878"/>
        <end position="972"/>
    </location>
</feature>
<feature type="domain" description="Fibronectin type-III 4" evidence="4">
    <location>
        <begin position="977"/>
        <end position="1067"/>
    </location>
</feature>
<feature type="region of interest" description="Disordered" evidence="5">
    <location>
        <begin position="958"/>
        <end position="983"/>
    </location>
</feature>
<feature type="lipid moiety-binding region" description="GPI-anchor amidated serine" evidence="2">
    <location>
        <position position="1072"/>
    </location>
</feature>
<feature type="glycosylation site" description="N-linked (GlcNAc...) asparagine" evidence="2">
    <location>
        <position position="138"/>
    </location>
</feature>
<feature type="glycosylation site" description="N-linked (GlcNAc...) asparagine" evidence="2">
    <location>
        <position position="196"/>
    </location>
</feature>
<feature type="glycosylation site" description="N-linked (GlcNAc...) asparagine" evidence="2">
    <location>
        <position position="397"/>
    </location>
</feature>
<feature type="glycosylation site" description="N-linked (GlcNAc...) asparagine" evidence="2">
    <location>
        <position position="449"/>
    </location>
</feature>
<feature type="glycosylation site" description="N-linked (GlcNAc...) asparagine" evidence="2">
    <location>
        <position position="540"/>
    </location>
</feature>
<feature type="glycosylation site" description="N-linked (GlcNAc...) asparagine" evidence="2">
    <location>
        <position position="779"/>
    </location>
</feature>
<feature type="glycosylation site" description="N-linked (GlcNAc...) asparagine" evidence="2">
    <location>
        <position position="816"/>
    </location>
</feature>
<feature type="glycosylation site" description="N-linked (GlcNAc...) asparagine" evidence="2">
    <location>
        <position position="931"/>
    </location>
</feature>
<feature type="glycosylation site" description="N-linked (GlcNAc...) asparagine" evidence="2">
    <location>
        <position position="1002"/>
    </location>
</feature>
<feature type="disulfide bond" evidence="3">
    <location>
        <begin position="123"/>
        <end position="173"/>
    </location>
</feature>
<feature type="disulfide bond" evidence="3">
    <location>
        <begin position="217"/>
        <end position="269"/>
    </location>
</feature>
<feature type="disulfide bond" evidence="3">
    <location>
        <begin position="322"/>
        <end position="369"/>
    </location>
</feature>
<feature type="disulfide bond" evidence="3">
    <location>
        <begin position="411"/>
        <end position="458"/>
    </location>
</feature>
<feature type="disulfide bond" evidence="3">
    <location>
        <begin position="503"/>
        <end position="551"/>
    </location>
</feature>
<feature type="disulfide bond" evidence="3">
    <location>
        <begin position="593"/>
        <end position="650"/>
    </location>
</feature>
<accession>P97527</accession>